<accession>B7ZQJ9</accession>
<accession>Q8JJ22</accession>
<sequence length="993" mass="110574">MALAGKQYEGSLNNSRPNLWPSSIPGGKNEIITSLVTALDSMCTALSKLNTEVACIALHEESAFVVGTEKGRCFLNSRKELQADFQRFCIGAHKKDQENEVKRRNRDGIQNIQHVPLGPTSDIYLLRKMVEEIFEVLYSEALGKSNIVPVPYVKVMKEPGSVVVLGLPDGISFRKPAEYDLKSLMLILKHSHNIRFKLRIPTEESIREPKSCSELNSPPTSATKVIPETSQCHRLPIQEHPSSASNFPYSVSQPNQISLEPKQEVHSNMLGTNAVNQMLVQRPSAENNHDLSDCCGQQSPVAGSSLRQNVLASKHLLFSIVHDKTDKWDSFLRETEDINILRECVQILFNSRYAGALGLDHMVPVPYRKIACHPEAVEINGFPDKIPFKRPCTYGVPKLKRILEERHNIHFTIKSMFDQRIFDGTTFTKETTKSDSSSLGEEACSENQKAAALDMLGFPTGSRSEKSSISDECEPGTSSETTGVKLIKLEAEDPDIMQIAVPGTSSETSGVKIIKLESEDPDLIQITVPGTSNETSGVKPKLESEDPDLIQIAVPDRLAECVKNHLAPEDPSYVLDTGKVCDDRPCGVLRNENKHLDGIGDIIRQLRKHVENLFNRKYAKAIGASGPVKVPYAKFLMYPEDLFVLGLPEGVAFRRPNCFGITKLRRILEYSDGIQFVVKRPELISEGLEDCVVGSPGTLGFNDKSNEVILDETNTRPSFQESFDARLSRIDIANTLREQVQVLFNKKYGEALGIKYPVQVPYKRIKNNPGSVIIEGLPPGIPFRKPCTFGSQNLERILAVADKIRFTVTRPFQGLIPRPDDEDANRLGEKVILREQVKELFNEKYGKALGLDQPALIPYKLIRDNPDAVEVRGMPNDIPFRNPNSYDLHRLENILKAQDQIQMVVIKQLEPFPEICSEPPKIKNGNTGPKRKRKRVSEGNSISSASSNCSSSSSSSSNMDPISSAHHVSLVQWPMYMLDYGGLNMQLPGPINY</sequence>
<keyword id="KW-0010">Activator</keyword>
<keyword id="KW-0217">Developmental protein</keyword>
<keyword id="KW-0238">DNA-binding</keyword>
<keyword id="KW-0539">Nucleus</keyword>
<keyword id="KW-1185">Reference proteome</keyword>
<keyword id="KW-0677">Repeat</keyword>
<keyword id="KW-0678">Repressor</keyword>
<keyword id="KW-0804">Transcription</keyword>
<keyword id="KW-0805">Transcription regulation</keyword>
<reference evidence="10 12" key="1">
    <citation type="journal article" date="2002" name="Genes Dev.">
        <title>The role of a Williams-Beuren syndrome-associated helix-loop-helix domain-containing transcription factor in activin/nodal signaling.</title>
        <authorList>
            <person name="Ring C."/>
            <person name="Ogata S."/>
            <person name="Meek L."/>
            <person name="Song J."/>
            <person name="Ohta T."/>
            <person name="Miyazono K."/>
            <person name="Cho K.W."/>
        </authorList>
    </citation>
    <scope>NUCLEOTIDE SEQUENCE [MRNA]</scope>
    <scope>FUNCTION</scope>
    <scope>INTERACTION WITH FOXH1; SMAD2 AND SMAD3</scope>
    <scope>TISSUE SPECIFICITY</scope>
    <scope>DEVELOPMENTAL STAGE</scope>
    <source>
        <tissue evidence="5">Oocyte</tissue>
    </source>
</reference>
<reference evidence="11" key="2">
    <citation type="submission" date="2008-11" db="EMBL/GenBank/DDBJ databases">
        <authorList>
            <consortium name="NIH - Xenopus Gene Collection (XGC) project"/>
        </authorList>
    </citation>
    <scope>NUCLEOTIDE SEQUENCE [LARGE SCALE MRNA]</scope>
    <source>
        <tissue evidence="11">Gastrula</tissue>
    </source>
</reference>
<reference evidence="10" key="3">
    <citation type="journal article" date="2005" name="Mol. Cell. Biol.">
        <title>Positive and negative regulation of the transforming growth factor beta/activin target gene goosecoid by the TFII-I family of transcription factors.</title>
        <authorList>
            <person name="Ku M."/>
            <person name="Sokol S.Y."/>
            <person name="Wu J."/>
            <person name="Tussie-Luna M.I."/>
            <person name="Roy A.L."/>
            <person name="Hata A."/>
        </authorList>
    </citation>
    <scope>FUNCTION</scope>
</reference>
<reference evidence="10" key="4">
    <citation type="journal article" date="2008" name="J. Biol. Chem.">
        <title>Oct25 represses transcription of nodal/activin target genes by interaction with signal transducers during Xenopus gastrulation.</title>
        <authorList>
            <person name="Cao Y."/>
            <person name="Siegel D."/>
            <person name="Oswald F."/>
            <person name="Knochel W."/>
        </authorList>
    </citation>
    <scope>FUNCTION</scope>
    <scope>INTERACTION WITH POU5F1.1</scope>
</reference>
<evidence type="ECO:0000250" key="1">
    <source>
        <dbReference type="UniProtKB" id="Q9UHL9"/>
    </source>
</evidence>
<evidence type="ECO:0000255" key="2"/>
<evidence type="ECO:0000255" key="3">
    <source>
        <dbReference type="PROSITE-ProRule" id="PRU00484"/>
    </source>
</evidence>
<evidence type="ECO:0000256" key="4">
    <source>
        <dbReference type="SAM" id="MobiDB-lite"/>
    </source>
</evidence>
<evidence type="ECO:0000269" key="5">
    <source>
    </source>
</evidence>
<evidence type="ECO:0000269" key="6">
    <source>
    </source>
</evidence>
<evidence type="ECO:0000269" key="7">
    <source>
    </source>
</evidence>
<evidence type="ECO:0000303" key="8">
    <source>
    </source>
</evidence>
<evidence type="ECO:0000303" key="9">
    <source>
    </source>
</evidence>
<evidence type="ECO:0000305" key="10"/>
<evidence type="ECO:0000312" key="11">
    <source>
        <dbReference type="EMBL" id="AAI69835.1"/>
    </source>
</evidence>
<evidence type="ECO:0000312" key="12">
    <source>
        <dbReference type="EMBL" id="AAM28813.1"/>
    </source>
</evidence>
<protein>
    <recommendedName>
        <fullName evidence="1">General transcription factor II-I repeat domain-containing protein 1</fullName>
    </recommendedName>
    <alternativeName>
        <fullName evidence="9">Binding factor for early enhancer</fullName>
        <shortName evidence="9">BEN</shortName>
        <shortName evidence="9">XBEN</shortName>
    </alternativeName>
    <alternativeName>
        <fullName>GTF2I repeat domain-containing protein 1</fullName>
    </alternativeName>
    <alternativeName>
        <fullName evidence="12">Williams-Beuren syndrome critical region 11-like protein</fullName>
        <shortName evidence="1 8">XWBSCR11</shortName>
    </alternativeName>
</protein>
<proteinExistence type="evidence at protein level"/>
<feature type="chain" id="PRO_0000390740" description="General transcription factor II-I repeat domain-containing protein 1">
    <location>
        <begin position="1"/>
        <end position="993"/>
    </location>
</feature>
<feature type="repeat" description="GTF2I-like 1" evidence="2">
    <location>
        <begin position="117"/>
        <end position="211"/>
    </location>
</feature>
<feature type="repeat" description="GTF2I-like 2" evidence="2">
    <location>
        <begin position="332"/>
        <end position="426"/>
    </location>
</feature>
<feature type="repeat" description="GTF2I-like 3" evidence="2">
    <location>
        <begin position="597"/>
        <end position="691"/>
    </location>
</feature>
<feature type="repeat" description="GTF2I-like 4" evidence="2">
    <location>
        <begin position="727"/>
        <end position="821"/>
    </location>
</feature>
<feature type="repeat" description="GTF2I-like 5" evidence="2">
    <location>
        <begin position="824"/>
        <end position="918"/>
    </location>
</feature>
<feature type="region of interest" description="Disordered" evidence="4">
    <location>
        <begin position="461"/>
        <end position="480"/>
    </location>
</feature>
<feature type="region of interest" description="Disordered" evidence="4">
    <location>
        <begin position="916"/>
        <end position="961"/>
    </location>
</feature>
<feature type="short sequence motif" description="Nuclear localization signal" evidence="1">
    <location>
        <begin position="929"/>
        <end position="936"/>
    </location>
</feature>
<feature type="compositionally biased region" description="Low complexity" evidence="4">
    <location>
        <begin position="938"/>
        <end position="961"/>
    </location>
</feature>
<feature type="sequence conflict" description="In Ref. 1; AAM28813." evidence="10" ref="1">
    <original>I</original>
    <variation>L</variation>
    <location>
        <position position="513"/>
    </location>
</feature>
<feature type="sequence conflict" description="In Ref. 1; AAM28813." evidence="10" ref="1">
    <original>K</original>
    <variation>KR</variation>
    <location>
        <position position="579"/>
    </location>
</feature>
<organism>
    <name type="scientific">Xenopus laevis</name>
    <name type="common">African clawed frog</name>
    <dbReference type="NCBI Taxonomy" id="8355"/>
    <lineage>
        <taxon>Eukaryota</taxon>
        <taxon>Metazoa</taxon>
        <taxon>Chordata</taxon>
        <taxon>Craniata</taxon>
        <taxon>Vertebrata</taxon>
        <taxon>Euteleostomi</taxon>
        <taxon>Amphibia</taxon>
        <taxon>Batrachia</taxon>
        <taxon>Anura</taxon>
        <taxon>Pipoidea</taxon>
        <taxon>Pipidae</taxon>
        <taxon>Xenopodinae</taxon>
        <taxon>Xenopus</taxon>
        <taxon>Xenopus</taxon>
    </lineage>
</organism>
<gene>
    <name type="primary">gtf2ird1</name>
    <name evidence="11" type="synonym">wbscr11</name>
</gene>
<comment type="function">
    <text evidence="5 6 7">Transcription factor that activates a subset of organizer-specific genes. Binds to the distal element (DE) of the gsc promoter to regulate its expression. In the presence of pou5f1.1/oct-25, forms a repression complex on the promoter of the gsc and mix2 genes to inhibit their transcription.</text>
</comment>
<comment type="subunit">
    <text evidence="5 7">Interacts (via repeats 4-5) with foxh1/fast1 (via Fork-head domain). Interacts with smad2 and smad3 (via MH1 domain) in a ligand (activin)-dependent manner. Interacts with pou5f1.1/oct-25 to form a repression complex on the promoters of the gsc and mix2 genes.</text>
</comment>
<comment type="subcellular location">
    <subcellularLocation>
        <location evidence="1 3">Nucleus</location>
    </subcellularLocation>
</comment>
<comment type="tissue specificity">
    <text evidence="5">Uniformly expressed in the embryo in pre- and early gastrula stages. Enriched in the head region of early neurula through tailbud stages.</text>
</comment>
<comment type="developmental stage">
    <text evidence="5">Expressed both maternally and zygotically at relatively consistent levels throughout development.</text>
</comment>
<comment type="similarity">
    <text evidence="3">Belongs to the TFII-I family.</text>
</comment>
<comment type="caution">
    <text evidence="5 6 10">There is conflicting evidence as to whether gtf2ird1 acts as a transcriptional activator or repressor when directly bound to the distal element of the gsc promoter. PubMed:11937490 shows that gtf2ird1 acts cooperatively with smads and foxh1/fast1 to activate activin/nodal-mediated gsc transcription. However, PubMed:16055724 report that in the absence of TGF-beta, gtf2ird1 represses gsc transcription. Upon TGF-beta stimulation, smad2 is translocated to the nucleus as a complex with smad4, interacts with TFII-I, and binds to the distal element to dislodge gtf2ird1 and up-regulate gsc gene transcription.</text>
</comment>
<dbReference type="EMBL" id="AF482757">
    <property type="protein sequence ID" value="AAM28813.1"/>
    <property type="molecule type" value="mRNA"/>
</dbReference>
<dbReference type="EMBL" id="BC169835">
    <property type="protein sequence ID" value="AAI69835.1"/>
    <property type="molecule type" value="mRNA"/>
</dbReference>
<dbReference type="RefSeq" id="NP_001082250.1">
    <property type="nucleotide sequence ID" value="NM_001088781.1"/>
</dbReference>
<dbReference type="SMR" id="B7ZQJ9"/>
<dbReference type="GeneID" id="398320"/>
<dbReference type="KEGG" id="xla:398320"/>
<dbReference type="AGR" id="Xenbase:XB-GENE-5857419"/>
<dbReference type="CTD" id="398320"/>
<dbReference type="Xenbase" id="XB-GENE-5857419">
    <property type="gene designation" value="gtf2ird1.S"/>
</dbReference>
<dbReference type="OrthoDB" id="9876044at2759"/>
<dbReference type="Proteomes" id="UP000186698">
    <property type="component" value="Chromosome 2S"/>
</dbReference>
<dbReference type="Bgee" id="398320">
    <property type="expression patterns" value="Expressed in egg cell and 17 other cell types or tissues"/>
</dbReference>
<dbReference type="GO" id="GO:0005634">
    <property type="term" value="C:nucleus"/>
    <property type="evidence" value="ECO:0000318"/>
    <property type="project" value="GO_Central"/>
</dbReference>
<dbReference type="GO" id="GO:0005667">
    <property type="term" value="C:transcription regulator complex"/>
    <property type="evidence" value="ECO:0000353"/>
    <property type="project" value="UniProtKB"/>
</dbReference>
<dbReference type="GO" id="GO:0003700">
    <property type="term" value="F:DNA-binding transcription factor activity"/>
    <property type="evidence" value="ECO:0000318"/>
    <property type="project" value="GO_Central"/>
</dbReference>
<dbReference type="GO" id="GO:0140297">
    <property type="term" value="F:DNA-binding transcription factor binding"/>
    <property type="evidence" value="ECO:0000353"/>
    <property type="project" value="UniProtKB"/>
</dbReference>
<dbReference type="GO" id="GO:0061629">
    <property type="term" value="F:RNA polymerase II-specific DNA-binding transcription factor binding"/>
    <property type="evidence" value="ECO:0000353"/>
    <property type="project" value="UniProtKB"/>
</dbReference>
<dbReference type="GO" id="GO:0046332">
    <property type="term" value="F:SMAD binding"/>
    <property type="evidence" value="ECO:0000353"/>
    <property type="project" value="UniProtKB"/>
</dbReference>
<dbReference type="GO" id="GO:0000976">
    <property type="term" value="F:transcription cis-regulatory region binding"/>
    <property type="evidence" value="ECO:0000314"/>
    <property type="project" value="UniProtKB"/>
</dbReference>
<dbReference type="GO" id="GO:0045892">
    <property type="term" value="P:negative regulation of DNA-templated transcription"/>
    <property type="evidence" value="ECO:0000314"/>
    <property type="project" value="UniProtKB"/>
</dbReference>
<dbReference type="GO" id="GO:0000122">
    <property type="term" value="P:negative regulation of transcription by RNA polymerase II"/>
    <property type="evidence" value="ECO:0000314"/>
    <property type="project" value="UniProtKB"/>
</dbReference>
<dbReference type="GO" id="GO:0045893">
    <property type="term" value="P:positive regulation of DNA-templated transcription"/>
    <property type="evidence" value="ECO:0000314"/>
    <property type="project" value="UniProtKB"/>
</dbReference>
<dbReference type="GO" id="GO:0045944">
    <property type="term" value="P:positive regulation of transcription by RNA polymerase II"/>
    <property type="evidence" value="ECO:0000314"/>
    <property type="project" value="UniProtKB"/>
</dbReference>
<dbReference type="GO" id="GO:0032925">
    <property type="term" value="P:regulation of activin receptor signaling pathway"/>
    <property type="evidence" value="ECO:0000315"/>
    <property type="project" value="UniProtKB"/>
</dbReference>
<dbReference type="GO" id="GO:0006366">
    <property type="term" value="P:transcription by RNA polymerase II"/>
    <property type="evidence" value="ECO:0007669"/>
    <property type="project" value="InterPro"/>
</dbReference>
<dbReference type="Gene3D" id="3.90.1460.10">
    <property type="entry name" value="GTF2I-like"/>
    <property type="match status" value="5"/>
</dbReference>
<dbReference type="InterPro" id="IPR004212">
    <property type="entry name" value="GTF2I"/>
</dbReference>
<dbReference type="InterPro" id="IPR036647">
    <property type="entry name" value="GTF2I-like_rpt_sf"/>
</dbReference>
<dbReference type="InterPro" id="IPR016659">
    <property type="entry name" value="TF_II-I"/>
</dbReference>
<dbReference type="PANTHER" id="PTHR46304">
    <property type="entry name" value="GENERAL TRANSCRIPTION FACTOR II-I REPEAT DOMAIN-CONTAINING PROTEIN 1"/>
    <property type="match status" value="1"/>
</dbReference>
<dbReference type="PANTHER" id="PTHR46304:SF1">
    <property type="entry name" value="GENERAL TRANSCRIPTION FACTOR II-I REPEAT DOMAIN-CONTAINING PROTEIN 1"/>
    <property type="match status" value="1"/>
</dbReference>
<dbReference type="Pfam" id="PF02946">
    <property type="entry name" value="GTF2I"/>
    <property type="match status" value="5"/>
</dbReference>
<dbReference type="PIRSF" id="PIRSF016441">
    <property type="entry name" value="TF_II-I"/>
    <property type="match status" value="1"/>
</dbReference>
<dbReference type="SUPFAM" id="SSF117773">
    <property type="entry name" value="GTF2I-like repeat"/>
    <property type="match status" value="5"/>
</dbReference>
<dbReference type="PROSITE" id="PS51139">
    <property type="entry name" value="GTF2I"/>
    <property type="match status" value="5"/>
</dbReference>
<name>GT2D1_XENLA</name>